<proteinExistence type="inferred from homology"/>
<name>MTFA_ECOHS</name>
<evidence type="ECO:0000255" key="1">
    <source>
        <dbReference type="HAMAP-Rule" id="MF_01593"/>
    </source>
</evidence>
<protein>
    <recommendedName>
        <fullName evidence="1">Mlc titration factor A</fullName>
    </recommendedName>
    <alternativeName>
        <fullName evidence="1">Probable zinc metallopeptidase MtfA</fullName>
        <ecNumber evidence="1">3.4.11.-</ecNumber>
    </alternativeName>
</protein>
<dbReference type="EC" id="3.4.11.-" evidence="1"/>
<dbReference type="EMBL" id="CP000802">
    <property type="protein sequence ID" value="ABV06400.1"/>
    <property type="molecule type" value="Genomic_DNA"/>
</dbReference>
<dbReference type="RefSeq" id="WP_001515476.1">
    <property type="nucleotide sequence ID" value="NC_009800.1"/>
</dbReference>
<dbReference type="SMR" id="A8A1J6"/>
<dbReference type="MEROPS" id="M90.001"/>
<dbReference type="KEGG" id="ecx:EcHS_A2099"/>
<dbReference type="HOGENOM" id="CLU_063037_2_0_6"/>
<dbReference type="GO" id="GO:0005829">
    <property type="term" value="C:cytosol"/>
    <property type="evidence" value="ECO:0007669"/>
    <property type="project" value="TreeGrafter"/>
</dbReference>
<dbReference type="GO" id="GO:0004177">
    <property type="term" value="F:aminopeptidase activity"/>
    <property type="evidence" value="ECO:0007669"/>
    <property type="project" value="UniProtKB-UniRule"/>
</dbReference>
<dbReference type="GO" id="GO:0008237">
    <property type="term" value="F:metallopeptidase activity"/>
    <property type="evidence" value="ECO:0007669"/>
    <property type="project" value="UniProtKB-UniRule"/>
</dbReference>
<dbReference type="GO" id="GO:0008270">
    <property type="term" value="F:zinc ion binding"/>
    <property type="evidence" value="ECO:0007669"/>
    <property type="project" value="UniProtKB-UniRule"/>
</dbReference>
<dbReference type="GO" id="GO:0006508">
    <property type="term" value="P:proteolysis"/>
    <property type="evidence" value="ECO:0007669"/>
    <property type="project" value="UniProtKB-KW"/>
</dbReference>
<dbReference type="CDD" id="cd20169">
    <property type="entry name" value="Peptidase_M90_mtfA"/>
    <property type="match status" value="1"/>
</dbReference>
<dbReference type="FunFam" id="1.10.472.150:FF:000001">
    <property type="entry name" value="Protein MtfA"/>
    <property type="match status" value="1"/>
</dbReference>
<dbReference type="FunFam" id="3.40.390.10:FF:000012">
    <property type="entry name" value="Protein MtfA"/>
    <property type="match status" value="1"/>
</dbReference>
<dbReference type="Gene3D" id="3.40.390.10">
    <property type="entry name" value="Collagenase (Catalytic Domain)"/>
    <property type="match status" value="1"/>
</dbReference>
<dbReference type="Gene3D" id="1.10.472.150">
    <property type="entry name" value="Glucose-regulated metallo-peptidase M90, N-terminal domain"/>
    <property type="match status" value="1"/>
</dbReference>
<dbReference type="HAMAP" id="MF_01593">
    <property type="entry name" value="MtfA"/>
    <property type="match status" value="1"/>
</dbReference>
<dbReference type="InterPro" id="IPR024079">
    <property type="entry name" value="MetalloPept_cat_dom_sf"/>
</dbReference>
<dbReference type="InterPro" id="IPR057256">
    <property type="entry name" value="MtfA_enterob"/>
</dbReference>
<dbReference type="InterPro" id="IPR010384">
    <property type="entry name" value="MtfA_fam"/>
</dbReference>
<dbReference type="InterPro" id="IPR042252">
    <property type="entry name" value="MtfA_N"/>
</dbReference>
<dbReference type="NCBIfam" id="NF011939">
    <property type="entry name" value="PRK15410.1"/>
    <property type="match status" value="1"/>
</dbReference>
<dbReference type="PANTHER" id="PTHR30164">
    <property type="entry name" value="MTFA PEPTIDASE"/>
    <property type="match status" value="1"/>
</dbReference>
<dbReference type="PANTHER" id="PTHR30164:SF2">
    <property type="entry name" value="PROTEIN MTFA"/>
    <property type="match status" value="1"/>
</dbReference>
<dbReference type="Pfam" id="PF06167">
    <property type="entry name" value="Peptidase_M90"/>
    <property type="match status" value="1"/>
</dbReference>
<dbReference type="SUPFAM" id="SSF55486">
    <property type="entry name" value="Metalloproteases ('zincins'), catalytic domain"/>
    <property type="match status" value="1"/>
</dbReference>
<sequence>MIKWPWKVQESAHQTALPWQEALSIPLLTGLTEQEQSKLVTLAERFLQQKRLVPLQGFELDSLRSCRIALLFCLPVLELGLEWLDGFHEVLIYPAPFVVDDEWEDDIGLVHNQRIVQSGQSWQQGPIVLNWLDIQDSFDASGFNLIIHEVAHKLDTRNGDRASGVPFIPLREVAGWEHDLHAAMNNIQEEIELVGENAASIDAYAASDPAECFAVLSEYFFSAPELFAPRFPSLWQRFCQFYQQDPLQRLHRTNDTDSFSATNVH</sequence>
<comment type="function">
    <text evidence="1">Involved in the modulation of the activity of the glucose-phosphotransferase system (glucose-PTS). Interacts with the transcriptional repressor Mlc, preventing its interaction with DNA and leading to the modulation of expression of genes regulated by Mlc, including ptsG, which encodes the PTS system glucose-specific EIICB component.</text>
</comment>
<comment type="function">
    <text evidence="1">Shows zinc-dependent metallopeptidase activity.</text>
</comment>
<comment type="cofactor">
    <cofactor evidence="1">
        <name>Zn(2+)</name>
        <dbReference type="ChEBI" id="CHEBI:29105"/>
    </cofactor>
    <text evidence="1">Binds 1 zinc ion per subunit.</text>
</comment>
<comment type="subunit">
    <text evidence="1">Interacts with Mlc.</text>
</comment>
<comment type="subcellular location">
    <subcellularLocation>
        <location evidence="1">Cytoplasm</location>
    </subcellularLocation>
</comment>
<comment type="similarity">
    <text evidence="1">Belongs to the MtfA family.</text>
</comment>
<accession>A8A1J6</accession>
<feature type="chain" id="PRO_0000316316" description="Mlc titration factor A">
    <location>
        <begin position="1"/>
        <end position="265"/>
    </location>
</feature>
<feature type="binding site" evidence="1">
    <location>
        <position position="111"/>
    </location>
    <ligand>
        <name>Zn(2+)</name>
        <dbReference type="ChEBI" id="CHEBI:29105"/>
    </ligand>
</feature>
<feature type="binding site" evidence="1">
    <location>
        <position position="148"/>
    </location>
    <ligand>
        <name>Zn(2+)</name>
        <dbReference type="ChEBI" id="CHEBI:29105"/>
    </ligand>
</feature>
<feature type="binding site" evidence="1">
    <location>
        <position position="152"/>
    </location>
    <ligand>
        <name>Zn(2+)</name>
        <dbReference type="ChEBI" id="CHEBI:29105"/>
    </ligand>
</feature>
<feature type="binding site" evidence="1">
    <location>
        <position position="211"/>
    </location>
    <ligand>
        <name>Zn(2+)</name>
        <dbReference type="ChEBI" id="CHEBI:29105"/>
    </ligand>
</feature>
<gene>
    <name evidence="1" type="primary">mtfA</name>
    <name type="ordered locus">EcHS_A2099</name>
</gene>
<keyword id="KW-0031">Aminopeptidase</keyword>
<keyword id="KW-0963">Cytoplasm</keyword>
<keyword id="KW-0378">Hydrolase</keyword>
<keyword id="KW-0479">Metal-binding</keyword>
<keyword id="KW-0482">Metalloprotease</keyword>
<keyword id="KW-0645">Protease</keyword>
<keyword id="KW-0862">Zinc</keyword>
<reference key="1">
    <citation type="journal article" date="2008" name="J. Bacteriol.">
        <title>The pangenome structure of Escherichia coli: comparative genomic analysis of E. coli commensal and pathogenic isolates.</title>
        <authorList>
            <person name="Rasko D.A."/>
            <person name="Rosovitz M.J."/>
            <person name="Myers G.S.A."/>
            <person name="Mongodin E.F."/>
            <person name="Fricke W.F."/>
            <person name="Gajer P."/>
            <person name="Crabtree J."/>
            <person name="Sebaihia M."/>
            <person name="Thomson N.R."/>
            <person name="Chaudhuri R."/>
            <person name="Henderson I.R."/>
            <person name="Sperandio V."/>
            <person name="Ravel J."/>
        </authorList>
    </citation>
    <scope>NUCLEOTIDE SEQUENCE [LARGE SCALE GENOMIC DNA]</scope>
    <source>
        <strain>HS</strain>
    </source>
</reference>
<organism>
    <name type="scientific">Escherichia coli O9:H4 (strain HS)</name>
    <dbReference type="NCBI Taxonomy" id="331112"/>
    <lineage>
        <taxon>Bacteria</taxon>
        <taxon>Pseudomonadati</taxon>
        <taxon>Pseudomonadota</taxon>
        <taxon>Gammaproteobacteria</taxon>
        <taxon>Enterobacterales</taxon>
        <taxon>Enterobacteriaceae</taxon>
        <taxon>Escherichia</taxon>
    </lineage>
</organism>